<reference key="1">
    <citation type="journal article" date="2004" name="Proc. Natl. Acad. Sci. U.S.A.">
        <title>Genome sequence of Picrophilus torridus and its implications for life around pH 0.</title>
        <authorList>
            <person name="Fuetterer O."/>
            <person name="Angelov A."/>
            <person name="Liesegang H."/>
            <person name="Gottschalk G."/>
            <person name="Schleper C."/>
            <person name="Schepers B."/>
            <person name="Dock C."/>
            <person name="Antranikian G."/>
            <person name="Liebl W."/>
        </authorList>
    </citation>
    <scope>NUCLEOTIDE SEQUENCE [LARGE SCALE GENOMIC DNA]</scope>
    <source>
        <strain>ATCC 700027 / DSM 9790 / JCM 10055 / NBRC 100828 / KAW 2/3</strain>
    </source>
</reference>
<sequence length="138" mass="15633">MIYIDASNHIYGRLSSYVAKKLLNGESITIVNASKVVITGRKEFIIDKFNNLRNTGSIRKGPYYPKTADRILKRSIGDMLPKKKTHGMEALKRCMVYANVPKSLENKNFERIESAMNKKVTGFITLGEISKILGETYE</sequence>
<protein>
    <recommendedName>
        <fullName evidence="1">Large ribosomal subunit protein uL13</fullName>
    </recommendedName>
    <alternativeName>
        <fullName evidence="2">50S ribosomal protein L13</fullName>
    </alternativeName>
</protein>
<evidence type="ECO:0000255" key="1">
    <source>
        <dbReference type="HAMAP-Rule" id="MF_01366"/>
    </source>
</evidence>
<evidence type="ECO:0000305" key="2"/>
<accession>Q6L294</accession>
<dbReference type="EMBL" id="AE017261">
    <property type="protein sequence ID" value="AAT42908.1"/>
    <property type="molecule type" value="Genomic_DNA"/>
</dbReference>
<dbReference type="RefSeq" id="WP_011177124.1">
    <property type="nucleotide sequence ID" value="NC_005877.1"/>
</dbReference>
<dbReference type="SMR" id="Q6L294"/>
<dbReference type="FunCoup" id="Q6L294">
    <property type="interactions" value="149"/>
</dbReference>
<dbReference type="STRING" id="263820.PTO0323"/>
<dbReference type="PaxDb" id="263820-PTO0323"/>
<dbReference type="GeneID" id="2844627"/>
<dbReference type="KEGG" id="pto:PTO0323"/>
<dbReference type="eggNOG" id="arCOG04242">
    <property type="taxonomic scope" value="Archaea"/>
</dbReference>
<dbReference type="HOGENOM" id="CLU_076922_1_0_2"/>
<dbReference type="InParanoid" id="Q6L294"/>
<dbReference type="OrthoDB" id="7668at2157"/>
<dbReference type="Proteomes" id="UP000000438">
    <property type="component" value="Chromosome"/>
</dbReference>
<dbReference type="GO" id="GO:0022625">
    <property type="term" value="C:cytosolic large ribosomal subunit"/>
    <property type="evidence" value="ECO:0007669"/>
    <property type="project" value="TreeGrafter"/>
</dbReference>
<dbReference type="GO" id="GO:0003729">
    <property type="term" value="F:mRNA binding"/>
    <property type="evidence" value="ECO:0007669"/>
    <property type="project" value="TreeGrafter"/>
</dbReference>
<dbReference type="GO" id="GO:0003735">
    <property type="term" value="F:structural constituent of ribosome"/>
    <property type="evidence" value="ECO:0007669"/>
    <property type="project" value="InterPro"/>
</dbReference>
<dbReference type="GO" id="GO:0017148">
    <property type="term" value="P:negative regulation of translation"/>
    <property type="evidence" value="ECO:0007669"/>
    <property type="project" value="TreeGrafter"/>
</dbReference>
<dbReference type="GO" id="GO:0006412">
    <property type="term" value="P:translation"/>
    <property type="evidence" value="ECO:0007669"/>
    <property type="project" value="InterPro"/>
</dbReference>
<dbReference type="CDD" id="cd00392">
    <property type="entry name" value="Ribosomal_L13"/>
    <property type="match status" value="1"/>
</dbReference>
<dbReference type="Gene3D" id="3.90.1180.10">
    <property type="entry name" value="Ribosomal protein L13"/>
    <property type="match status" value="1"/>
</dbReference>
<dbReference type="InterPro" id="IPR005822">
    <property type="entry name" value="Ribosomal_uL13"/>
</dbReference>
<dbReference type="InterPro" id="IPR005823">
    <property type="entry name" value="Ribosomal_uL13_bac-type"/>
</dbReference>
<dbReference type="InterPro" id="IPR005755">
    <property type="entry name" value="Ribosomal_uL13_euk/arc"/>
</dbReference>
<dbReference type="InterPro" id="IPR036899">
    <property type="entry name" value="Ribosomal_uL13_sf"/>
</dbReference>
<dbReference type="NCBIfam" id="TIGR01077">
    <property type="entry name" value="L13_A_E"/>
    <property type="match status" value="1"/>
</dbReference>
<dbReference type="NCBIfam" id="NF005004">
    <property type="entry name" value="PRK06394.1"/>
    <property type="match status" value="1"/>
</dbReference>
<dbReference type="PANTHER" id="PTHR11545:SF3">
    <property type="entry name" value="LARGE RIBOSOMAL SUBUNIT PROTEIN UL13"/>
    <property type="match status" value="1"/>
</dbReference>
<dbReference type="PANTHER" id="PTHR11545">
    <property type="entry name" value="RIBOSOMAL PROTEIN L13"/>
    <property type="match status" value="1"/>
</dbReference>
<dbReference type="Pfam" id="PF00572">
    <property type="entry name" value="Ribosomal_L13"/>
    <property type="match status" value="1"/>
</dbReference>
<dbReference type="PIRSF" id="PIRSF002181">
    <property type="entry name" value="Ribosomal_L13"/>
    <property type="match status" value="1"/>
</dbReference>
<dbReference type="SUPFAM" id="SSF52161">
    <property type="entry name" value="Ribosomal protein L13"/>
    <property type="match status" value="1"/>
</dbReference>
<organism>
    <name type="scientific">Picrophilus torridus (strain ATCC 700027 / DSM 9790 / JCM 10055 / NBRC 100828 / KAW 2/3)</name>
    <dbReference type="NCBI Taxonomy" id="1122961"/>
    <lineage>
        <taxon>Archaea</taxon>
        <taxon>Methanobacteriati</taxon>
        <taxon>Thermoplasmatota</taxon>
        <taxon>Thermoplasmata</taxon>
        <taxon>Thermoplasmatales</taxon>
        <taxon>Picrophilaceae</taxon>
        <taxon>Picrophilus</taxon>
    </lineage>
</organism>
<gene>
    <name evidence="1" type="primary">rpl13</name>
    <name type="ordered locus">PTO0323</name>
</gene>
<feature type="chain" id="PRO_0000261847" description="Large ribosomal subunit protein uL13">
    <location>
        <begin position="1"/>
        <end position="138"/>
    </location>
</feature>
<keyword id="KW-0687">Ribonucleoprotein</keyword>
<keyword id="KW-0689">Ribosomal protein</keyword>
<proteinExistence type="inferred from homology"/>
<name>RL13_PICTO</name>
<comment type="function">
    <text evidence="1">This protein is one of the early assembly proteins of the 50S ribosomal subunit, although it is not seen to bind rRNA by itself. It is important during the early stages of 50S assembly.</text>
</comment>
<comment type="subunit">
    <text evidence="1">Part of the 50S ribosomal subunit.</text>
</comment>
<comment type="similarity">
    <text evidence="1">Belongs to the universal ribosomal protein uL13 family.</text>
</comment>